<feature type="chain" id="PRO_0000345811" description="tRNA modification GTPase MnmE">
    <location>
        <begin position="1"/>
        <end position="461"/>
    </location>
</feature>
<feature type="domain" description="TrmE-type G">
    <location>
        <begin position="224"/>
        <end position="382"/>
    </location>
</feature>
<feature type="binding site" evidence="1">
    <location>
        <position position="27"/>
    </location>
    <ligand>
        <name>(6S)-5-formyl-5,6,7,8-tetrahydrofolate</name>
        <dbReference type="ChEBI" id="CHEBI:57457"/>
    </ligand>
</feature>
<feature type="binding site" evidence="1">
    <location>
        <position position="89"/>
    </location>
    <ligand>
        <name>(6S)-5-formyl-5,6,7,8-tetrahydrofolate</name>
        <dbReference type="ChEBI" id="CHEBI:57457"/>
    </ligand>
</feature>
<feature type="binding site" evidence="1">
    <location>
        <position position="128"/>
    </location>
    <ligand>
        <name>(6S)-5-formyl-5,6,7,8-tetrahydrofolate</name>
        <dbReference type="ChEBI" id="CHEBI:57457"/>
    </ligand>
</feature>
<feature type="binding site" evidence="1">
    <location>
        <begin position="234"/>
        <end position="239"/>
    </location>
    <ligand>
        <name>GTP</name>
        <dbReference type="ChEBI" id="CHEBI:37565"/>
    </ligand>
</feature>
<feature type="binding site" evidence="1">
    <location>
        <position position="234"/>
    </location>
    <ligand>
        <name>K(+)</name>
        <dbReference type="ChEBI" id="CHEBI:29103"/>
    </ligand>
</feature>
<feature type="binding site" evidence="1">
    <location>
        <position position="238"/>
    </location>
    <ligand>
        <name>Mg(2+)</name>
        <dbReference type="ChEBI" id="CHEBI:18420"/>
    </ligand>
</feature>
<feature type="binding site" evidence="1">
    <location>
        <begin position="253"/>
        <end position="259"/>
    </location>
    <ligand>
        <name>GTP</name>
        <dbReference type="ChEBI" id="CHEBI:37565"/>
    </ligand>
</feature>
<feature type="binding site" evidence="1">
    <location>
        <position position="253"/>
    </location>
    <ligand>
        <name>K(+)</name>
        <dbReference type="ChEBI" id="CHEBI:29103"/>
    </ligand>
</feature>
<feature type="binding site" evidence="1">
    <location>
        <position position="255"/>
    </location>
    <ligand>
        <name>K(+)</name>
        <dbReference type="ChEBI" id="CHEBI:29103"/>
    </ligand>
</feature>
<feature type="binding site" evidence="1">
    <location>
        <position position="258"/>
    </location>
    <ligand>
        <name>K(+)</name>
        <dbReference type="ChEBI" id="CHEBI:29103"/>
    </ligand>
</feature>
<feature type="binding site" evidence="1">
    <location>
        <position position="259"/>
    </location>
    <ligand>
        <name>Mg(2+)</name>
        <dbReference type="ChEBI" id="CHEBI:18420"/>
    </ligand>
</feature>
<feature type="binding site" evidence="1">
    <location>
        <begin position="278"/>
        <end position="281"/>
    </location>
    <ligand>
        <name>GTP</name>
        <dbReference type="ChEBI" id="CHEBI:37565"/>
    </ligand>
</feature>
<feature type="binding site" evidence="1">
    <location>
        <position position="461"/>
    </location>
    <ligand>
        <name>(6S)-5-formyl-5,6,7,8-tetrahydrofolate</name>
        <dbReference type="ChEBI" id="CHEBI:57457"/>
    </ligand>
</feature>
<accession>Q74H94</accession>
<organism>
    <name type="scientific">Lactobacillus johnsonii (strain CNCM I-12250 / La1 / NCC 533)</name>
    <dbReference type="NCBI Taxonomy" id="257314"/>
    <lineage>
        <taxon>Bacteria</taxon>
        <taxon>Bacillati</taxon>
        <taxon>Bacillota</taxon>
        <taxon>Bacilli</taxon>
        <taxon>Lactobacillales</taxon>
        <taxon>Lactobacillaceae</taxon>
        <taxon>Lactobacillus</taxon>
    </lineage>
</organism>
<protein>
    <recommendedName>
        <fullName evidence="1">tRNA modification GTPase MnmE</fullName>
        <ecNumber evidence="1">3.6.-.-</ecNumber>
    </recommendedName>
</protein>
<dbReference type="EC" id="3.6.-.-" evidence="1"/>
<dbReference type="EMBL" id="AE017198">
    <property type="protein sequence ID" value="AAS09799.1"/>
    <property type="molecule type" value="Genomic_DNA"/>
</dbReference>
<dbReference type="RefSeq" id="WP_004898268.1">
    <property type="nucleotide sequence ID" value="NC_005362.1"/>
</dbReference>
<dbReference type="SMR" id="Q74H94"/>
<dbReference type="KEGG" id="ljo:LJ_1855"/>
<dbReference type="eggNOG" id="COG0486">
    <property type="taxonomic scope" value="Bacteria"/>
</dbReference>
<dbReference type="HOGENOM" id="CLU_019624_4_1_9"/>
<dbReference type="Proteomes" id="UP000000581">
    <property type="component" value="Chromosome"/>
</dbReference>
<dbReference type="GO" id="GO:0005829">
    <property type="term" value="C:cytosol"/>
    <property type="evidence" value="ECO:0007669"/>
    <property type="project" value="TreeGrafter"/>
</dbReference>
<dbReference type="GO" id="GO:0005525">
    <property type="term" value="F:GTP binding"/>
    <property type="evidence" value="ECO:0007669"/>
    <property type="project" value="UniProtKB-UniRule"/>
</dbReference>
<dbReference type="GO" id="GO:0003924">
    <property type="term" value="F:GTPase activity"/>
    <property type="evidence" value="ECO:0007669"/>
    <property type="project" value="UniProtKB-UniRule"/>
</dbReference>
<dbReference type="GO" id="GO:0046872">
    <property type="term" value="F:metal ion binding"/>
    <property type="evidence" value="ECO:0007669"/>
    <property type="project" value="UniProtKB-KW"/>
</dbReference>
<dbReference type="GO" id="GO:0030488">
    <property type="term" value="P:tRNA methylation"/>
    <property type="evidence" value="ECO:0007669"/>
    <property type="project" value="TreeGrafter"/>
</dbReference>
<dbReference type="GO" id="GO:0002098">
    <property type="term" value="P:tRNA wobble uridine modification"/>
    <property type="evidence" value="ECO:0007669"/>
    <property type="project" value="TreeGrafter"/>
</dbReference>
<dbReference type="CDD" id="cd04164">
    <property type="entry name" value="trmE"/>
    <property type="match status" value="1"/>
</dbReference>
<dbReference type="CDD" id="cd14858">
    <property type="entry name" value="TrmE_N"/>
    <property type="match status" value="1"/>
</dbReference>
<dbReference type="FunFam" id="3.30.1360.120:FF:000003">
    <property type="entry name" value="tRNA modification GTPase MnmE"/>
    <property type="match status" value="1"/>
</dbReference>
<dbReference type="FunFam" id="3.40.50.300:FF:000494">
    <property type="entry name" value="tRNA modification GTPase MnmE"/>
    <property type="match status" value="1"/>
</dbReference>
<dbReference type="Gene3D" id="3.40.50.300">
    <property type="entry name" value="P-loop containing nucleotide triphosphate hydrolases"/>
    <property type="match status" value="1"/>
</dbReference>
<dbReference type="Gene3D" id="3.30.1360.120">
    <property type="entry name" value="Probable tRNA modification gtpase trme, domain 1"/>
    <property type="match status" value="1"/>
</dbReference>
<dbReference type="Gene3D" id="1.20.120.430">
    <property type="entry name" value="tRNA modification GTPase MnmE domain 2"/>
    <property type="match status" value="1"/>
</dbReference>
<dbReference type="HAMAP" id="MF_00379">
    <property type="entry name" value="GTPase_MnmE"/>
    <property type="match status" value="1"/>
</dbReference>
<dbReference type="InterPro" id="IPR031168">
    <property type="entry name" value="G_TrmE"/>
</dbReference>
<dbReference type="InterPro" id="IPR006073">
    <property type="entry name" value="GTP-bd"/>
</dbReference>
<dbReference type="InterPro" id="IPR018948">
    <property type="entry name" value="GTP-bd_TrmE_N"/>
</dbReference>
<dbReference type="InterPro" id="IPR004520">
    <property type="entry name" value="GTPase_MnmE"/>
</dbReference>
<dbReference type="InterPro" id="IPR027368">
    <property type="entry name" value="MnmE_dom2"/>
</dbReference>
<dbReference type="InterPro" id="IPR025867">
    <property type="entry name" value="MnmE_helical"/>
</dbReference>
<dbReference type="InterPro" id="IPR027417">
    <property type="entry name" value="P-loop_NTPase"/>
</dbReference>
<dbReference type="InterPro" id="IPR005225">
    <property type="entry name" value="Small_GTP-bd"/>
</dbReference>
<dbReference type="InterPro" id="IPR027266">
    <property type="entry name" value="TrmE/GcvT_dom1"/>
</dbReference>
<dbReference type="NCBIfam" id="TIGR00450">
    <property type="entry name" value="mnmE_trmE_thdF"/>
    <property type="match status" value="1"/>
</dbReference>
<dbReference type="NCBIfam" id="NF003661">
    <property type="entry name" value="PRK05291.1-3"/>
    <property type="match status" value="1"/>
</dbReference>
<dbReference type="NCBIfam" id="TIGR00231">
    <property type="entry name" value="small_GTP"/>
    <property type="match status" value="1"/>
</dbReference>
<dbReference type="PANTHER" id="PTHR42714">
    <property type="entry name" value="TRNA MODIFICATION GTPASE GTPBP3"/>
    <property type="match status" value="1"/>
</dbReference>
<dbReference type="PANTHER" id="PTHR42714:SF2">
    <property type="entry name" value="TRNA MODIFICATION GTPASE GTPBP3, MITOCHONDRIAL"/>
    <property type="match status" value="1"/>
</dbReference>
<dbReference type="Pfam" id="PF01926">
    <property type="entry name" value="MMR_HSR1"/>
    <property type="match status" value="1"/>
</dbReference>
<dbReference type="Pfam" id="PF12631">
    <property type="entry name" value="MnmE_helical"/>
    <property type="match status" value="1"/>
</dbReference>
<dbReference type="Pfam" id="PF10396">
    <property type="entry name" value="TrmE_N"/>
    <property type="match status" value="1"/>
</dbReference>
<dbReference type="SUPFAM" id="SSF52540">
    <property type="entry name" value="P-loop containing nucleoside triphosphate hydrolases"/>
    <property type="match status" value="1"/>
</dbReference>
<dbReference type="PROSITE" id="PS51709">
    <property type="entry name" value="G_TRME"/>
    <property type="match status" value="1"/>
</dbReference>
<evidence type="ECO:0000255" key="1">
    <source>
        <dbReference type="HAMAP-Rule" id="MF_00379"/>
    </source>
</evidence>
<sequence>MAQVLTQFDTIAAISTPIGEGGISIVRLSGEDAVAIANKLFKGADLTQVPSHTIHYGHIVDPKTKDVVDETMVSVLRAPKTFTREDMVEINCHGGMIVTNDILQLLLANGARMADPGEFTKRAFMNGRIDLTQAESVMDIVRAKTDKSRQVAMTQLAGGLLDKIRTMRQELLDTMAHEEVNIDYPEYDMDDLTSQEMKKKAEEVSKQIDQLLKTAQEGKIIRNGLATAIVGRPNVGKSSLLNYLTQDDKAIVTDIAGTTRDTLEEYVSVKGVPLKLIDTAGIHHTEDKVEKIGVERSKKAIAEADLVLLLLDASQDLTDEDKNLLNLTANKKRIIILNKQDLGTKISQEMIREITDNPIIVTSILKQENMAALENAIEQLFFSGIENSQNQILVTNQRQAGLLAKAKQSLEDVVNGIDDAMPLDLVQIDLKNAWDTLGEITGESAPDELITQLFSQFCLGK</sequence>
<name>MNME_LACJO</name>
<comment type="function">
    <text evidence="1">Exhibits a very high intrinsic GTPase hydrolysis rate. Involved in the addition of a carboxymethylaminomethyl (cmnm) group at the wobble position (U34) of certain tRNAs, forming tRNA-cmnm(5)s(2)U34.</text>
</comment>
<comment type="cofactor">
    <cofactor evidence="1">
        <name>K(+)</name>
        <dbReference type="ChEBI" id="CHEBI:29103"/>
    </cofactor>
    <text evidence="1">Binds 1 potassium ion per subunit.</text>
</comment>
<comment type="subunit">
    <text evidence="1">Homodimer. Heterotetramer of two MnmE and two MnmG subunits.</text>
</comment>
<comment type="subcellular location">
    <subcellularLocation>
        <location evidence="1">Cytoplasm</location>
    </subcellularLocation>
</comment>
<comment type="similarity">
    <text evidence="1">Belongs to the TRAFAC class TrmE-Era-EngA-EngB-Septin-like GTPase superfamily. TrmE GTPase family.</text>
</comment>
<proteinExistence type="inferred from homology"/>
<reference key="1">
    <citation type="journal article" date="2004" name="Proc. Natl. Acad. Sci. U.S.A.">
        <title>The genome sequence of the probiotic intestinal bacterium Lactobacillus johnsonii NCC 533.</title>
        <authorList>
            <person name="Pridmore R.D."/>
            <person name="Berger B."/>
            <person name="Desiere F."/>
            <person name="Vilanova D."/>
            <person name="Barretto C."/>
            <person name="Pittet A.-C."/>
            <person name="Zwahlen M.-C."/>
            <person name="Rouvet M."/>
            <person name="Altermann E."/>
            <person name="Barrangou R."/>
            <person name="Mollet B."/>
            <person name="Mercenier A."/>
            <person name="Klaenhammer T."/>
            <person name="Arigoni F."/>
            <person name="Schell M.A."/>
        </authorList>
    </citation>
    <scope>NUCLEOTIDE SEQUENCE [LARGE SCALE GENOMIC DNA]</scope>
    <source>
        <strain>CNCM I-1225 / La1 / NCC 533</strain>
    </source>
</reference>
<keyword id="KW-0963">Cytoplasm</keyword>
<keyword id="KW-0342">GTP-binding</keyword>
<keyword id="KW-0378">Hydrolase</keyword>
<keyword id="KW-0460">Magnesium</keyword>
<keyword id="KW-0479">Metal-binding</keyword>
<keyword id="KW-0547">Nucleotide-binding</keyword>
<keyword id="KW-0630">Potassium</keyword>
<keyword id="KW-0819">tRNA processing</keyword>
<gene>
    <name evidence="1" type="primary">mnmE</name>
    <name evidence="1" type="synonym">trmE</name>
    <name type="ordered locus">LJ_1855</name>
</gene>